<gene>
    <name evidence="1" type="primary">rlmM</name>
    <name type="ordered locus">PBPRA2987</name>
</gene>
<proteinExistence type="inferred from homology"/>
<keyword id="KW-0963">Cytoplasm</keyword>
<keyword id="KW-0489">Methyltransferase</keyword>
<keyword id="KW-1185">Reference proteome</keyword>
<keyword id="KW-0698">rRNA processing</keyword>
<keyword id="KW-0949">S-adenosyl-L-methionine</keyword>
<keyword id="KW-0808">Transferase</keyword>
<feature type="chain" id="PRO_0000070412" description="Ribosomal RNA large subunit methyltransferase M">
    <location>
        <begin position="1"/>
        <end position="360"/>
    </location>
</feature>
<feature type="active site" description="Proton acceptor" evidence="1">
    <location>
        <position position="305"/>
    </location>
</feature>
<feature type="binding site" evidence="1">
    <location>
        <position position="187"/>
    </location>
    <ligand>
        <name>S-adenosyl-L-methionine</name>
        <dbReference type="ChEBI" id="CHEBI:59789"/>
    </ligand>
</feature>
<feature type="binding site" evidence="1">
    <location>
        <begin position="220"/>
        <end position="223"/>
    </location>
    <ligand>
        <name>S-adenosyl-L-methionine</name>
        <dbReference type="ChEBI" id="CHEBI:59789"/>
    </ligand>
</feature>
<feature type="binding site" evidence="1">
    <location>
        <position position="239"/>
    </location>
    <ligand>
        <name>S-adenosyl-L-methionine</name>
        <dbReference type="ChEBI" id="CHEBI:59789"/>
    </ligand>
</feature>
<feature type="binding site" evidence="1">
    <location>
        <position position="259"/>
    </location>
    <ligand>
        <name>S-adenosyl-L-methionine</name>
        <dbReference type="ChEBI" id="CHEBI:59789"/>
    </ligand>
</feature>
<feature type="binding site" evidence="1">
    <location>
        <position position="276"/>
    </location>
    <ligand>
        <name>S-adenosyl-L-methionine</name>
        <dbReference type="ChEBI" id="CHEBI:59789"/>
    </ligand>
</feature>
<protein>
    <recommendedName>
        <fullName evidence="1">Ribosomal RNA large subunit methyltransferase M</fullName>
        <ecNumber evidence="1">2.1.1.186</ecNumber>
    </recommendedName>
    <alternativeName>
        <fullName evidence="1">23S rRNA (cytidine2498-2'-O)-methyltransferase</fullName>
    </alternativeName>
    <alternativeName>
        <fullName evidence="1">23S rRNA 2'-O-ribose methyltransferase RlmM</fullName>
    </alternativeName>
</protein>
<dbReference type="EC" id="2.1.1.186" evidence="1"/>
<dbReference type="EMBL" id="CR378672">
    <property type="protein sequence ID" value="CAG21321.1"/>
    <property type="molecule type" value="Genomic_DNA"/>
</dbReference>
<dbReference type="RefSeq" id="WP_011219587.1">
    <property type="nucleotide sequence ID" value="NC_006370.1"/>
</dbReference>
<dbReference type="SMR" id="Q6LN05"/>
<dbReference type="STRING" id="298386.PBPRA2987"/>
<dbReference type="KEGG" id="ppr:PBPRA2987"/>
<dbReference type="eggNOG" id="COG2933">
    <property type="taxonomic scope" value="Bacteria"/>
</dbReference>
<dbReference type="HOGENOM" id="CLU_043780_0_0_6"/>
<dbReference type="Proteomes" id="UP000000593">
    <property type="component" value="Chromosome 1"/>
</dbReference>
<dbReference type="GO" id="GO:0005737">
    <property type="term" value="C:cytoplasm"/>
    <property type="evidence" value="ECO:0007669"/>
    <property type="project" value="UniProtKB-SubCell"/>
</dbReference>
<dbReference type="GO" id="GO:0008757">
    <property type="term" value="F:S-adenosylmethionine-dependent methyltransferase activity"/>
    <property type="evidence" value="ECO:0007669"/>
    <property type="project" value="UniProtKB-UniRule"/>
</dbReference>
<dbReference type="GO" id="GO:0032259">
    <property type="term" value="P:methylation"/>
    <property type="evidence" value="ECO:0007669"/>
    <property type="project" value="UniProtKB-KW"/>
</dbReference>
<dbReference type="GO" id="GO:0006364">
    <property type="term" value="P:rRNA processing"/>
    <property type="evidence" value="ECO:0007669"/>
    <property type="project" value="UniProtKB-UniRule"/>
</dbReference>
<dbReference type="Gene3D" id="3.30.2300.20">
    <property type="match status" value="1"/>
</dbReference>
<dbReference type="Gene3D" id="3.30.70.2810">
    <property type="match status" value="1"/>
</dbReference>
<dbReference type="Gene3D" id="3.40.50.150">
    <property type="entry name" value="Vaccinia Virus protein VP39"/>
    <property type="match status" value="1"/>
</dbReference>
<dbReference type="HAMAP" id="MF_01551">
    <property type="entry name" value="23SrRNA_methyltr_M"/>
    <property type="match status" value="1"/>
</dbReference>
<dbReference type="InterPro" id="IPR040739">
    <property type="entry name" value="RlmM_FDX"/>
</dbReference>
<dbReference type="InterPro" id="IPR048646">
    <property type="entry name" value="RlmM_THUMP-like"/>
</dbReference>
<dbReference type="InterPro" id="IPR002877">
    <property type="entry name" value="RNA_MeTrfase_FtsJ_dom"/>
</dbReference>
<dbReference type="InterPro" id="IPR011224">
    <property type="entry name" value="rRNA_MeTrfase_M"/>
</dbReference>
<dbReference type="InterPro" id="IPR029063">
    <property type="entry name" value="SAM-dependent_MTases_sf"/>
</dbReference>
<dbReference type="NCBIfam" id="NF008734">
    <property type="entry name" value="PRK11760.1"/>
    <property type="match status" value="1"/>
</dbReference>
<dbReference type="PANTHER" id="PTHR37524">
    <property type="entry name" value="RIBOSOMAL RNA LARGE SUBUNIT METHYLTRANSFERASE M"/>
    <property type="match status" value="1"/>
</dbReference>
<dbReference type="PANTHER" id="PTHR37524:SF2">
    <property type="entry name" value="RIBOSOMAL RNA METHYLTRANSFERASE FTSJ DOMAIN-CONTAINING PROTEIN"/>
    <property type="match status" value="1"/>
</dbReference>
<dbReference type="Pfam" id="PF01728">
    <property type="entry name" value="FtsJ"/>
    <property type="match status" value="1"/>
</dbReference>
<dbReference type="Pfam" id="PF18125">
    <property type="entry name" value="RlmM_FDX"/>
    <property type="match status" value="1"/>
</dbReference>
<dbReference type="Pfam" id="PF21239">
    <property type="entry name" value="RLMM_N"/>
    <property type="match status" value="1"/>
</dbReference>
<dbReference type="PIRSF" id="PIRSF028774">
    <property type="entry name" value="UCP028774"/>
    <property type="match status" value="1"/>
</dbReference>
<dbReference type="SUPFAM" id="SSF53335">
    <property type="entry name" value="S-adenosyl-L-methionine-dependent methyltransferases"/>
    <property type="match status" value="1"/>
</dbReference>
<comment type="function">
    <text evidence="1">Catalyzes the 2'-O-methylation at nucleotide C2498 in 23S rRNA.</text>
</comment>
<comment type="catalytic activity">
    <reaction evidence="1">
        <text>cytidine(2498) in 23S rRNA + S-adenosyl-L-methionine = 2'-O-methylcytidine(2498) in 23S rRNA + S-adenosyl-L-homocysteine + H(+)</text>
        <dbReference type="Rhea" id="RHEA:42788"/>
        <dbReference type="Rhea" id="RHEA-COMP:10244"/>
        <dbReference type="Rhea" id="RHEA-COMP:10245"/>
        <dbReference type="ChEBI" id="CHEBI:15378"/>
        <dbReference type="ChEBI" id="CHEBI:57856"/>
        <dbReference type="ChEBI" id="CHEBI:59789"/>
        <dbReference type="ChEBI" id="CHEBI:74495"/>
        <dbReference type="ChEBI" id="CHEBI:82748"/>
        <dbReference type="EC" id="2.1.1.186"/>
    </reaction>
</comment>
<comment type="subunit">
    <text evidence="1">Monomer.</text>
</comment>
<comment type="subcellular location">
    <subcellularLocation>
        <location evidence="1">Cytoplasm</location>
    </subcellularLocation>
</comment>
<comment type="similarity">
    <text evidence="1">Belongs to the class I-like SAM-binding methyltransferase superfamily. RNA methyltransferase RlmE family. RlmM subfamily.</text>
</comment>
<evidence type="ECO:0000255" key="1">
    <source>
        <dbReference type="HAMAP-Rule" id="MF_01551"/>
    </source>
</evidence>
<reference key="1">
    <citation type="journal article" date="2005" name="Science">
        <title>Life at depth: Photobacterium profundum genome sequence and expression analysis.</title>
        <authorList>
            <person name="Vezzi A."/>
            <person name="Campanaro S."/>
            <person name="D'Angelo M."/>
            <person name="Simonato F."/>
            <person name="Vitulo N."/>
            <person name="Lauro F.M."/>
            <person name="Cestaro A."/>
            <person name="Malacrida G."/>
            <person name="Simionati B."/>
            <person name="Cannata N."/>
            <person name="Romualdi C."/>
            <person name="Bartlett D.H."/>
            <person name="Valle G."/>
        </authorList>
    </citation>
    <scope>NUCLEOTIDE SEQUENCE [LARGE SCALE GENOMIC DNA]</scope>
    <source>
        <strain>ATCC BAA-1253 / SS9</strain>
    </source>
</reference>
<organism>
    <name type="scientific">Photobacterium profundum (strain SS9)</name>
    <dbReference type="NCBI Taxonomy" id="298386"/>
    <lineage>
        <taxon>Bacteria</taxon>
        <taxon>Pseudomonadati</taxon>
        <taxon>Pseudomonadota</taxon>
        <taxon>Gammaproteobacteria</taxon>
        <taxon>Vibrionales</taxon>
        <taxon>Vibrionaceae</taxon>
        <taxon>Photobacterium</taxon>
    </lineage>
</organism>
<sequence length="360" mass="41612">MNHVILYCRPGFEKECAGEVQDKANKLELFGFPRTKNNTGYVVFEFHQQGDADKFIKLQPFSSLIFARQMFAATKLLTDLPQEDRISPILEAVKGFPRCGELRIETPDTNEAKELLKFCRKFTVPLRQAMRKKDVLYAQDSTWKPVLHVCFIAPGCCFVGYSYTNNNSQFFMGIPRLKFPSDAPSRSTLKLEEAFHVFIPRDEWDERLAPGMWGVDLGACPGGWTYQLVKRSMFVHAIDNGQMAQSLMDTGQVKYHAVDGFKFEPARKNVTWIVCDMIEKPARVAHLMGEWLVKAWAKEAIFNLKLPMKGRYDEVLQDIENLKQYFIKNGMKFELQAKHLYHDREEITVHVRCLDNRSPH</sequence>
<accession>Q6LN05</accession>
<name>RLMM_PHOPR</name>